<feature type="chain" id="PRO_1000002048" description="SsrA-binding protein">
    <location>
        <begin position="1"/>
        <end position="160"/>
    </location>
</feature>
<name>SSRP_ECOUT</name>
<gene>
    <name evidence="1" type="primary">smpB</name>
    <name type="ordered locus">UTI89_C2954</name>
</gene>
<keyword id="KW-0963">Cytoplasm</keyword>
<keyword id="KW-0694">RNA-binding</keyword>
<evidence type="ECO:0000255" key="1">
    <source>
        <dbReference type="HAMAP-Rule" id="MF_00023"/>
    </source>
</evidence>
<protein>
    <recommendedName>
        <fullName evidence="1">SsrA-binding protein</fullName>
    </recommendedName>
    <alternativeName>
        <fullName evidence="1">Small protein B</fullName>
    </alternativeName>
</protein>
<proteinExistence type="inferred from homology"/>
<dbReference type="EMBL" id="CP000243">
    <property type="protein sequence ID" value="ABE08410.1"/>
    <property type="molecule type" value="Genomic_DNA"/>
</dbReference>
<dbReference type="RefSeq" id="WP_000162574.1">
    <property type="nucleotide sequence ID" value="NZ_CP064825.1"/>
</dbReference>
<dbReference type="SMR" id="Q1R8A4"/>
<dbReference type="GeneID" id="93774470"/>
<dbReference type="KEGG" id="eci:UTI89_C2954"/>
<dbReference type="HOGENOM" id="CLU_108953_3_0_6"/>
<dbReference type="Proteomes" id="UP000001952">
    <property type="component" value="Chromosome"/>
</dbReference>
<dbReference type="GO" id="GO:0005829">
    <property type="term" value="C:cytosol"/>
    <property type="evidence" value="ECO:0007669"/>
    <property type="project" value="TreeGrafter"/>
</dbReference>
<dbReference type="GO" id="GO:0003723">
    <property type="term" value="F:RNA binding"/>
    <property type="evidence" value="ECO:0007669"/>
    <property type="project" value="UniProtKB-UniRule"/>
</dbReference>
<dbReference type="GO" id="GO:0070929">
    <property type="term" value="P:trans-translation"/>
    <property type="evidence" value="ECO:0007669"/>
    <property type="project" value="UniProtKB-UniRule"/>
</dbReference>
<dbReference type="CDD" id="cd09294">
    <property type="entry name" value="SmpB"/>
    <property type="match status" value="1"/>
</dbReference>
<dbReference type="FunFam" id="2.40.280.10:FF:000001">
    <property type="entry name" value="SsrA-binding protein"/>
    <property type="match status" value="1"/>
</dbReference>
<dbReference type="Gene3D" id="2.40.280.10">
    <property type="match status" value="1"/>
</dbReference>
<dbReference type="HAMAP" id="MF_00023">
    <property type="entry name" value="SmpB"/>
    <property type="match status" value="1"/>
</dbReference>
<dbReference type="InterPro" id="IPR023620">
    <property type="entry name" value="SmpB"/>
</dbReference>
<dbReference type="InterPro" id="IPR000037">
    <property type="entry name" value="SsrA-bd_prot"/>
</dbReference>
<dbReference type="InterPro" id="IPR020081">
    <property type="entry name" value="SsrA-bd_prot_CS"/>
</dbReference>
<dbReference type="NCBIfam" id="NF003843">
    <property type="entry name" value="PRK05422.1"/>
    <property type="match status" value="1"/>
</dbReference>
<dbReference type="NCBIfam" id="TIGR00086">
    <property type="entry name" value="smpB"/>
    <property type="match status" value="1"/>
</dbReference>
<dbReference type="PANTHER" id="PTHR30308:SF2">
    <property type="entry name" value="SSRA-BINDING PROTEIN"/>
    <property type="match status" value="1"/>
</dbReference>
<dbReference type="PANTHER" id="PTHR30308">
    <property type="entry name" value="TMRNA-BINDING COMPONENT OF TRANS-TRANSLATION TAGGING COMPLEX"/>
    <property type="match status" value="1"/>
</dbReference>
<dbReference type="Pfam" id="PF01668">
    <property type="entry name" value="SmpB"/>
    <property type="match status" value="1"/>
</dbReference>
<dbReference type="SUPFAM" id="SSF74982">
    <property type="entry name" value="Small protein B (SmpB)"/>
    <property type="match status" value="1"/>
</dbReference>
<dbReference type="PROSITE" id="PS01317">
    <property type="entry name" value="SSRP"/>
    <property type="match status" value="1"/>
</dbReference>
<reference key="1">
    <citation type="journal article" date="2006" name="Proc. Natl. Acad. Sci. U.S.A.">
        <title>Identification of genes subject to positive selection in uropathogenic strains of Escherichia coli: a comparative genomics approach.</title>
        <authorList>
            <person name="Chen S.L."/>
            <person name="Hung C.-S."/>
            <person name="Xu J."/>
            <person name="Reigstad C.S."/>
            <person name="Magrini V."/>
            <person name="Sabo A."/>
            <person name="Blasiar D."/>
            <person name="Bieri T."/>
            <person name="Meyer R.R."/>
            <person name="Ozersky P."/>
            <person name="Armstrong J.R."/>
            <person name="Fulton R.S."/>
            <person name="Latreille J.P."/>
            <person name="Spieth J."/>
            <person name="Hooton T.M."/>
            <person name="Mardis E.R."/>
            <person name="Hultgren S.J."/>
            <person name="Gordon J.I."/>
        </authorList>
    </citation>
    <scope>NUCLEOTIDE SEQUENCE [LARGE SCALE GENOMIC DNA]</scope>
    <source>
        <strain>UTI89 / UPEC</strain>
    </source>
</reference>
<comment type="function">
    <text evidence="1">Required for rescue of stalled ribosomes mediated by trans-translation. Binds to transfer-messenger RNA (tmRNA), required for stable association of tmRNA with ribosomes. tmRNA and SmpB together mimic tRNA shape, replacing the anticodon stem-loop with SmpB. tmRNA is encoded by the ssrA gene; the 2 termini fold to resemble tRNA(Ala) and it encodes a 'tag peptide', a short internal open reading frame. During trans-translation Ala-aminoacylated tmRNA acts like a tRNA, entering the A-site of stalled ribosomes, displacing the stalled mRNA. The ribosome then switches to translate the ORF on the tmRNA; the nascent peptide is terminated with the 'tag peptide' encoded by the tmRNA and targeted for degradation. The ribosome is freed to recommence translation, which seems to be the essential function of trans-translation.</text>
</comment>
<comment type="subcellular location">
    <subcellularLocation>
        <location evidence="1">Cytoplasm</location>
    </subcellularLocation>
    <text evidence="1">The tmRNA-SmpB complex associates with stalled 70S ribosomes.</text>
</comment>
<comment type="similarity">
    <text evidence="1">Belongs to the SmpB family.</text>
</comment>
<organism>
    <name type="scientific">Escherichia coli (strain UTI89 / UPEC)</name>
    <dbReference type="NCBI Taxonomy" id="364106"/>
    <lineage>
        <taxon>Bacteria</taxon>
        <taxon>Pseudomonadati</taxon>
        <taxon>Pseudomonadota</taxon>
        <taxon>Gammaproteobacteria</taxon>
        <taxon>Enterobacterales</taxon>
        <taxon>Enterobacteriaceae</taxon>
        <taxon>Escherichia</taxon>
    </lineage>
</organism>
<accession>Q1R8A4</accession>
<sequence>MTKKKAHKPGSATIALNKRARHEYFIEEEFEAGLALQGWEVKSLRAGKANISDSYVLLRDGEAFLFGANITPMAVASTHVVCDPTRTRKLLLNQRELDSLYGRVNREGYTVVALSLYWKNAWCKVKIGVAKGKKQHDKRSDIKEREWQVDKARIMKNAHR</sequence>